<reference key="1">
    <citation type="journal article" date="1993" name="Mol. Gen. Genet.">
        <title>Molecular cloning, sequence analysis, and characterization of a new cell wall hydrolase, CwlL, of Bacillus licheniformis.</title>
        <authorList>
            <person name="Oda Y."/>
            <person name="Nakayama R."/>
            <person name="Kuroda A."/>
            <person name="Sekiguchi J."/>
        </authorList>
    </citation>
    <scope>NUCLEOTIDE SEQUENCE [GENOMIC DNA]</scope>
    <source>
        <strain>FD0120</strain>
    </source>
</reference>
<name>YAF2_BACLI</name>
<protein>
    <recommendedName>
        <fullName>Uncharacterized 9.7 kDa protein in cwlL 5'region</fullName>
    </recommendedName>
</protein>
<comment type="subcellular location">
    <subcellularLocation>
        <location evidence="2">Membrane</location>
        <topology evidence="2">Single-pass membrane protein</topology>
    </subcellularLocation>
</comment>
<comment type="similarity">
    <text evidence="2">Belongs to the SPP1 holin family.</text>
</comment>
<evidence type="ECO:0000255" key="1"/>
<evidence type="ECO:0000305" key="2"/>
<organism>
    <name type="scientific">Bacillus licheniformis</name>
    <dbReference type="NCBI Taxonomy" id="1402"/>
    <lineage>
        <taxon>Bacteria</taxon>
        <taxon>Bacillati</taxon>
        <taxon>Bacillota</taxon>
        <taxon>Bacilli</taxon>
        <taxon>Bacillales</taxon>
        <taxon>Bacillaceae</taxon>
        <taxon>Bacillus</taxon>
    </lineage>
</organism>
<feature type="chain" id="PRO_0000164432" description="Uncharacterized 9.7 kDa protein in cwlL 5'region">
    <location>
        <begin position="1"/>
        <end position="87"/>
    </location>
</feature>
<feature type="transmembrane region" description="Helical" evidence="1">
    <location>
        <begin position="44"/>
        <end position="64"/>
    </location>
</feature>
<sequence length="87" mass="9690">MKNLDKGTVIRTVLLFVALVNQTLIMFGKSRLPISEDQVNTLADALYLAGSTIFTIVTTLVAWFKNNYVTSKGKLQKETLKQKGLTK</sequence>
<dbReference type="EMBL" id="D13377">
    <property type="protein sequence ID" value="BAA02646.1"/>
    <property type="molecule type" value="Genomic_DNA"/>
</dbReference>
<dbReference type="PIR" id="S39915">
    <property type="entry name" value="S39915"/>
</dbReference>
<dbReference type="SMR" id="P36549"/>
<dbReference type="GO" id="GO:0016020">
    <property type="term" value="C:membrane"/>
    <property type="evidence" value="ECO:0007669"/>
    <property type="project" value="UniProtKB-SubCell"/>
</dbReference>
<dbReference type="InterPro" id="IPR006479">
    <property type="entry name" value="Holin"/>
</dbReference>
<dbReference type="NCBIfam" id="TIGR01592">
    <property type="entry name" value="holin_SPP1"/>
    <property type="match status" value="1"/>
</dbReference>
<dbReference type="Pfam" id="PF04688">
    <property type="entry name" value="Holin_SPP1"/>
    <property type="match status" value="1"/>
</dbReference>
<gene>
    <name type="primary">xpaF2</name>
</gene>
<proteinExistence type="inferred from homology"/>
<keyword id="KW-0472">Membrane</keyword>
<keyword id="KW-0812">Transmembrane</keyword>
<keyword id="KW-1133">Transmembrane helix</keyword>
<accession>P36549</accession>